<accession>Q06JG4</accession>
<feature type="signal peptide" evidence="2">
    <location>
        <begin position="1"/>
        <end position="30"/>
    </location>
</feature>
<feature type="chain" id="PRO_0000401219" description="CLAVATA3/ESR (CLE)-related protein 16D10">
    <location>
        <begin position="31"/>
        <end position="43"/>
    </location>
</feature>
<feature type="short sequence motif" description="CLE">
    <location>
        <begin position="31"/>
        <end position="43"/>
    </location>
</feature>
<gene>
    <name type="primary">16D10</name>
</gene>
<keyword id="KW-0221">Differentiation</keyword>
<keyword id="KW-1035">Host cytoplasm</keyword>
<keyword id="KW-0964">Secreted</keyword>
<keyword id="KW-0732">Signal</keyword>
<reference key="1">
    <citation type="journal article" date="2006" name="Proc. Natl. Acad. Sci. U.S.A.">
        <title>Engineering broad root-knot resistance in transgenic plants by RNAi silencing of a conserved and essential root-knot nematode parasitism gene.</title>
        <authorList>
            <person name="Huang G."/>
            <person name="Allen R."/>
            <person name="Davis E.L."/>
            <person name="Baum T.J."/>
            <person name="Hussey R.S."/>
        </authorList>
    </citation>
    <scope>NUCLEOTIDE SEQUENCE [GENOMIC DNA]</scope>
    <scope>FUNCTION</scope>
</reference>
<reference key="2">
    <citation type="journal article" date="2008" name="Curr. Opin. Plant Biol.">
        <title>Diverse and conserved roles of CLE peptides.</title>
        <authorList>
            <person name="Mitchum M.G."/>
            <person name="Wang X."/>
            <person name="Davis E.L."/>
        </authorList>
    </citation>
    <scope>REVIEW</scope>
</reference>
<proteinExistence type="evidence at transcript level"/>
<sequence length="43" mass="4625">MFTNSIKNLIIYLMPLMVTLMLLSVSFVDAGKKPSGPNPGGNN</sequence>
<protein>
    <recommendedName>
        <fullName>CLAVATA3/ESR (CLE)-related protein 16D10</fullName>
    </recommendedName>
</protein>
<dbReference type="EMBL" id="DQ841123">
    <property type="protein sequence ID" value="ABI33933.1"/>
    <property type="molecule type" value="Genomic_DNA"/>
</dbReference>
<dbReference type="Proteomes" id="UP000095281">
    <property type="component" value="Whole Genome Shotgun Assembly"/>
</dbReference>
<dbReference type="GO" id="GO:0005576">
    <property type="term" value="C:extracellular region"/>
    <property type="evidence" value="ECO:0007669"/>
    <property type="project" value="UniProtKB-SubCell"/>
</dbReference>
<dbReference type="GO" id="GO:0030430">
    <property type="term" value="C:host cell cytoplasm"/>
    <property type="evidence" value="ECO:0007669"/>
    <property type="project" value="UniProtKB-SubCell"/>
</dbReference>
<dbReference type="GO" id="GO:0043655">
    <property type="term" value="C:host extracellular space"/>
    <property type="evidence" value="ECO:0007669"/>
    <property type="project" value="UniProtKB-SubCell"/>
</dbReference>
<dbReference type="GO" id="GO:0030154">
    <property type="term" value="P:cell differentiation"/>
    <property type="evidence" value="ECO:0007669"/>
    <property type="project" value="UniProtKB-KW"/>
</dbReference>
<organism>
    <name type="scientific">Meloidogyne hapla</name>
    <name type="common">Root-knot nematode worm</name>
    <dbReference type="NCBI Taxonomy" id="6305"/>
    <lineage>
        <taxon>Eukaryota</taxon>
        <taxon>Metazoa</taxon>
        <taxon>Ecdysozoa</taxon>
        <taxon>Nematoda</taxon>
        <taxon>Chromadorea</taxon>
        <taxon>Rhabditida</taxon>
        <taxon>Tylenchina</taxon>
        <taxon>Tylenchomorpha</taxon>
        <taxon>Tylenchoidea</taxon>
        <taxon>Meloidogynidae</taxon>
        <taxon>Meloidogyninae</taxon>
        <taxon>Meloidogyne</taxon>
    </lineage>
</organism>
<evidence type="ECO:0000250" key="1"/>
<evidence type="ECO:0000255" key="2"/>
<evidence type="ECO:0000269" key="3">
    <source>
    </source>
</evidence>
<evidence type="ECO:0000305" key="4"/>
<comment type="function">
    <text evidence="3">Plays a role in the differentiation or division of feeding cells (syncytia) induced in plant roots during infection. Promotes host root growth.</text>
</comment>
<comment type="subcellular location">
    <subcellularLocation>
        <location evidence="1">Secreted</location>
    </subcellularLocation>
    <subcellularLocation>
        <location evidence="1">Host cytoplasm</location>
    </subcellularLocation>
    <subcellularLocation>
        <location evidence="1">Host extracellular space</location>
    </subcellularLocation>
    <text evidence="1">Secreted into host root cells via the nematode stylet to transform the recipient cells into enlarged multinucleate feeding cells called giant-cells or syncytia.</text>
</comment>
<comment type="tissue specificity">
    <text>Highly expressed exclusively within the subventral esophageal gland cell during syncytium formation in host plants.</text>
</comment>
<comment type="similarity">
    <text evidence="4">Belongs to the CLV3/ESR signal peptide family.</text>
</comment>
<name>16D10_MELHA</name>